<proteinExistence type="inferred from homology"/>
<keyword id="KW-0066">ATP synthesis</keyword>
<keyword id="KW-0067">ATP-binding</keyword>
<keyword id="KW-0139">CF(1)</keyword>
<keyword id="KW-0375">Hydrogen ion transport</keyword>
<keyword id="KW-0406">Ion transport</keyword>
<keyword id="KW-0472">Membrane</keyword>
<keyword id="KW-0496">Mitochondrion</keyword>
<keyword id="KW-0999">Mitochondrion inner membrane</keyword>
<keyword id="KW-0547">Nucleotide-binding</keyword>
<keyword id="KW-0813">Transport</keyword>
<organism>
    <name type="scientific">Marchantia polymorpha</name>
    <name type="common">Common liverwort</name>
    <name type="synonym">Marchantia aquatica</name>
    <dbReference type="NCBI Taxonomy" id="3197"/>
    <lineage>
        <taxon>Eukaryota</taxon>
        <taxon>Viridiplantae</taxon>
        <taxon>Streptophyta</taxon>
        <taxon>Embryophyta</taxon>
        <taxon>Marchantiophyta</taxon>
        <taxon>Marchantiopsida</taxon>
        <taxon>Marchantiidae</taxon>
        <taxon>Marchantiales</taxon>
        <taxon>Marchantiaceae</taxon>
        <taxon>Marchantia</taxon>
    </lineage>
</organism>
<feature type="chain" id="PRO_0000144401" description="ATP synthase subunit alpha, mitochondrial">
    <location>
        <begin position="1"/>
        <end position="513"/>
    </location>
</feature>
<feature type="binding site" evidence="1">
    <location>
        <begin position="170"/>
        <end position="177"/>
    </location>
    <ligand>
        <name>ATP</name>
        <dbReference type="ChEBI" id="CHEBI:30616"/>
    </ligand>
</feature>
<feature type="site" description="Required for activity" evidence="1">
    <location>
        <position position="372"/>
    </location>
</feature>
<dbReference type="EMBL" id="M68929">
    <property type="protein sequence ID" value="AAC09446.1"/>
    <property type="molecule type" value="Genomic_DNA"/>
</dbReference>
<dbReference type="PIR" id="S25955">
    <property type="entry name" value="S25955"/>
</dbReference>
<dbReference type="RefSeq" id="NP_054447.1">
    <property type="nucleotide sequence ID" value="NC_001660.1"/>
</dbReference>
<dbReference type="SMR" id="P26854"/>
<dbReference type="GeneID" id="2702482"/>
<dbReference type="GO" id="GO:0005743">
    <property type="term" value="C:mitochondrial inner membrane"/>
    <property type="evidence" value="ECO:0007669"/>
    <property type="project" value="UniProtKB-SubCell"/>
</dbReference>
<dbReference type="GO" id="GO:0045259">
    <property type="term" value="C:proton-transporting ATP synthase complex"/>
    <property type="evidence" value="ECO:0007669"/>
    <property type="project" value="UniProtKB-KW"/>
</dbReference>
<dbReference type="GO" id="GO:0005524">
    <property type="term" value="F:ATP binding"/>
    <property type="evidence" value="ECO:0007669"/>
    <property type="project" value="UniProtKB-KW"/>
</dbReference>
<dbReference type="GO" id="GO:0046933">
    <property type="term" value="F:proton-transporting ATP synthase activity, rotational mechanism"/>
    <property type="evidence" value="ECO:0007669"/>
    <property type="project" value="InterPro"/>
</dbReference>
<dbReference type="CDD" id="cd18113">
    <property type="entry name" value="ATP-synt_F1_alpha_C"/>
    <property type="match status" value="1"/>
</dbReference>
<dbReference type="CDD" id="cd18116">
    <property type="entry name" value="ATP-synt_F1_alpha_N"/>
    <property type="match status" value="1"/>
</dbReference>
<dbReference type="CDD" id="cd01132">
    <property type="entry name" value="F1-ATPase_alpha_CD"/>
    <property type="match status" value="1"/>
</dbReference>
<dbReference type="FunFam" id="1.20.150.20:FF:000001">
    <property type="entry name" value="ATP synthase subunit alpha"/>
    <property type="match status" value="1"/>
</dbReference>
<dbReference type="FunFam" id="2.40.30.20:FF:000001">
    <property type="entry name" value="ATP synthase subunit alpha"/>
    <property type="match status" value="1"/>
</dbReference>
<dbReference type="FunFam" id="3.40.50.300:FF:002432">
    <property type="entry name" value="ATP synthase subunit alpha, mitochondrial"/>
    <property type="match status" value="1"/>
</dbReference>
<dbReference type="Gene3D" id="2.40.30.20">
    <property type="match status" value="1"/>
</dbReference>
<dbReference type="Gene3D" id="1.20.150.20">
    <property type="entry name" value="ATP synthase alpha/beta chain, C-terminal domain"/>
    <property type="match status" value="1"/>
</dbReference>
<dbReference type="Gene3D" id="3.40.50.300">
    <property type="entry name" value="P-loop containing nucleotide triphosphate hydrolases"/>
    <property type="match status" value="1"/>
</dbReference>
<dbReference type="HAMAP" id="MF_01346">
    <property type="entry name" value="ATP_synth_alpha_bact"/>
    <property type="match status" value="1"/>
</dbReference>
<dbReference type="InterPro" id="IPR023366">
    <property type="entry name" value="ATP_synth_asu-like_sf"/>
</dbReference>
<dbReference type="InterPro" id="IPR000793">
    <property type="entry name" value="ATP_synth_asu_C"/>
</dbReference>
<dbReference type="InterPro" id="IPR038376">
    <property type="entry name" value="ATP_synth_asu_C_sf"/>
</dbReference>
<dbReference type="InterPro" id="IPR033732">
    <property type="entry name" value="ATP_synth_F1_a_nt-bd_dom"/>
</dbReference>
<dbReference type="InterPro" id="IPR005294">
    <property type="entry name" value="ATP_synth_F1_asu"/>
</dbReference>
<dbReference type="InterPro" id="IPR020003">
    <property type="entry name" value="ATPase_a/bsu_AS"/>
</dbReference>
<dbReference type="InterPro" id="IPR004100">
    <property type="entry name" value="ATPase_F1/V1/A1_a/bsu_N"/>
</dbReference>
<dbReference type="InterPro" id="IPR036121">
    <property type="entry name" value="ATPase_F1/V1/A1_a/bsu_N_sf"/>
</dbReference>
<dbReference type="InterPro" id="IPR000194">
    <property type="entry name" value="ATPase_F1/V1/A1_a/bsu_nucl-bd"/>
</dbReference>
<dbReference type="InterPro" id="IPR027417">
    <property type="entry name" value="P-loop_NTPase"/>
</dbReference>
<dbReference type="NCBIfam" id="TIGR00962">
    <property type="entry name" value="atpA"/>
    <property type="match status" value="1"/>
</dbReference>
<dbReference type="NCBIfam" id="NF009884">
    <property type="entry name" value="PRK13343.1"/>
    <property type="match status" value="1"/>
</dbReference>
<dbReference type="PANTHER" id="PTHR48082">
    <property type="entry name" value="ATP SYNTHASE SUBUNIT ALPHA, MITOCHONDRIAL"/>
    <property type="match status" value="1"/>
</dbReference>
<dbReference type="PANTHER" id="PTHR48082:SF2">
    <property type="entry name" value="ATP SYNTHASE SUBUNIT ALPHA, MITOCHONDRIAL"/>
    <property type="match status" value="1"/>
</dbReference>
<dbReference type="Pfam" id="PF00006">
    <property type="entry name" value="ATP-synt_ab"/>
    <property type="match status" value="1"/>
</dbReference>
<dbReference type="Pfam" id="PF00306">
    <property type="entry name" value="ATP-synt_ab_C"/>
    <property type="match status" value="1"/>
</dbReference>
<dbReference type="Pfam" id="PF02874">
    <property type="entry name" value="ATP-synt_ab_N"/>
    <property type="match status" value="1"/>
</dbReference>
<dbReference type="PIRSF" id="PIRSF039088">
    <property type="entry name" value="F_ATPase_subunit_alpha"/>
    <property type="match status" value="1"/>
</dbReference>
<dbReference type="SUPFAM" id="SSF47917">
    <property type="entry name" value="C-terminal domain of alpha and beta subunits of F1 ATP synthase"/>
    <property type="match status" value="1"/>
</dbReference>
<dbReference type="SUPFAM" id="SSF50615">
    <property type="entry name" value="N-terminal domain of alpha and beta subunits of F1 ATP synthase"/>
    <property type="match status" value="1"/>
</dbReference>
<dbReference type="SUPFAM" id="SSF52540">
    <property type="entry name" value="P-loop containing nucleoside triphosphate hydrolases"/>
    <property type="match status" value="1"/>
</dbReference>
<dbReference type="PROSITE" id="PS00152">
    <property type="entry name" value="ATPASE_ALPHA_BETA"/>
    <property type="match status" value="1"/>
</dbReference>
<sequence length="513" mass="55441">MNKLAGAELSTLLEQRITNYYTKLQVDEIGRVVSVGDGIARVYGLNKIQAGEMVEFASGVKGMALNLENENVGIVIFGSDTAIKEGDIVKRTGSIVDVPVGKGMLGRVVDALGVPIDGKGALSAVERRRVEVKAPGIIARKSVHEPMQTGLKAVDSLVPIGRGQRELIIGDRQTGKTAIAIDTILNQKQINAQGTSDSEKLYCVYVAIGQKRSTVAQLVKILSEAGALEYSIIVAATASDPAPLQFLAPYSGCAMGEYFRDNGMHALIIYDDLSKQSVAYRQMSLLLRRPPGREAFPGDVFYLHSRLLERAAKMSDQTGAGSLTALPVIETQAGDVSAYIPTNVISITDGQIFLETELFYRGSRPAINVGLSVSRVGSAAQLKAMKQVCGSLKLELAQYREVAAFAQFGSDLDAATQYLLNRGARLTEILKQAQYSPIPIEKQIVVIYAAVKGYLDQIPVALITHYEQELLKSIDPGLLSAIVQQKNITEQISSQLATFCQKFTQSFLATHQS</sequence>
<reference key="1">
    <citation type="journal article" date="1992" name="J. Mol. Biol.">
        <title>Gene organization deduced from the complete sequence of liverwort Marchantia polymorpha mitochondrial DNA. A primitive form of plant mitochondrial genome.</title>
        <authorList>
            <person name="Oda K."/>
            <person name="Yamato K."/>
            <person name="Ohta E."/>
            <person name="Nakamura Y."/>
            <person name="Takemura M."/>
            <person name="Nozato N."/>
            <person name="Akashi K."/>
            <person name="Kanegae T."/>
            <person name="Ogura Y."/>
            <person name="Kohchi T."/>
            <person name="Ohyama K."/>
        </authorList>
    </citation>
    <scope>NUCLEOTIDE SEQUENCE [GENOMIC DNA]</scope>
</reference>
<evidence type="ECO:0000250" key="1"/>
<evidence type="ECO:0000305" key="2"/>
<accession>P26854</accession>
<gene>
    <name type="primary">ATPA</name>
</gene>
<geneLocation type="mitochondrion"/>
<name>ATPAM_MARPO</name>
<comment type="function">
    <text evidence="1">Mitochondrial membrane ATP synthase (F(1)F(0) ATP synthase or Complex V) produces ATP from ADP in the presence of a proton gradient across the membrane which is generated by electron transport complexes of the respiratory chain. F-type ATPases consist of two structural domains, F(1) - containing the extramembraneous catalytic core, and F(0) - containing the membrane proton channel, linked together by a central stalk and a peripheral stalk. During catalysis, ATP synthesis in the catalytic domain of F(1) is coupled via a rotary mechanism of the central stalk subunits to proton translocation. Subunits alpha and beta form the catalytic core in F(1). Rotation of the central stalk against the surrounding alpha(3)beta(3) subunits leads to hydrolysis of ATP in three separate catalytic sites on the beta subunits. Subunit alpha does not bear the catalytic high-affinity ATP-binding sites (By similarity).</text>
</comment>
<comment type="subunit">
    <text>F-type ATPases have 2 components, CF(1) - the catalytic core - and CF(0) - the membrane proton channel. CF(1) has five subunits: alpha(3), beta(3), gamma(1), delta(1), epsilon(1). CF(0) has three main subunits: a, b and c.</text>
</comment>
<comment type="subcellular location">
    <subcellularLocation>
        <location>Mitochondrion</location>
    </subcellularLocation>
    <subcellularLocation>
        <location>Mitochondrion inner membrane</location>
    </subcellularLocation>
    <text>Peripheral membrane protein.</text>
</comment>
<comment type="similarity">
    <text evidence="2">Belongs to the ATPase alpha/beta chains family.</text>
</comment>
<protein>
    <recommendedName>
        <fullName>ATP synthase subunit alpha, mitochondrial</fullName>
    </recommendedName>
</protein>